<gene>
    <name evidence="1" type="primary">dapF</name>
    <name type="ordered locus">BQ13480</name>
</gene>
<accession>Q6FYC7</accession>
<feature type="chain" id="PRO_1000011847" description="Diaminopimelate epimerase">
    <location>
        <begin position="1"/>
        <end position="283"/>
    </location>
</feature>
<feature type="active site" description="Proton donor" evidence="1">
    <location>
        <position position="74"/>
    </location>
</feature>
<feature type="active site" description="Proton acceptor" evidence="1">
    <location>
        <position position="217"/>
    </location>
</feature>
<feature type="binding site" evidence="1">
    <location>
        <position position="13"/>
    </location>
    <ligand>
        <name>substrate</name>
    </ligand>
</feature>
<feature type="binding site" evidence="1">
    <location>
        <position position="45"/>
    </location>
    <ligand>
        <name>substrate</name>
    </ligand>
</feature>
<feature type="binding site" evidence="1">
    <location>
        <position position="65"/>
    </location>
    <ligand>
        <name>substrate</name>
    </ligand>
</feature>
<feature type="binding site" evidence="1">
    <location>
        <begin position="75"/>
        <end position="76"/>
    </location>
    <ligand>
        <name>substrate</name>
    </ligand>
</feature>
<feature type="binding site" evidence="1">
    <location>
        <position position="156"/>
    </location>
    <ligand>
        <name>substrate</name>
    </ligand>
</feature>
<feature type="binding site" evidence="1">
    <location>
        <position position="190"/>
    </location>
    <ligand>
        <name>substrate</name>
    </ligand>
</feature>
<feature type="binding site" evidence="1">
    <location>
        <begin position="208"/>
        <end position="209"/>
    </location>
    <ligand>
        <name>substrate</name>
    </ligand>
</feature>
<feature type="binding site" evidence="1">
    <location>
        <begin position="218"/>
        <end position="219"/>
    </location>
    <ligand>
        <name>substrate</name>
    </ligand>
</feature>
<feature type="site" description="Could be important to modulate the pK values of the two catalytic cysteine residues" evidence="1">
    <location>
        <position position="158"/>
    </location>
</feature>
<feature type="site" description="Could be important to modulate the pK values of the two catalytic cysteine residues" evidence="1">
    <location>
        <position position="208"/>
    </location>
</feature>
<reference key="1">
    <citation type="journal article" date="2004" name="Proc. Natl. Acad. Sci. U.S.A.">
        <title>The louse-borne human pathogen Bartonella quintana is a genomic derivative of the zoonotic agent Bartonella henselae.</title>
        <authorList>
            <person name="Alsmark U.C.M."/>
            <person name="Frank A.C."/>
            <person name="Karlberg E.O."/>
            <person name="Legault B.-A."/>
            <person name="Ardell D.H."/>
            <person name="Canbaeck B."/>
            <person name="Eriksson A.-S."/>
            <person name="Naeslund A.K."/>
            <person name="Handley S.A."/>
            <person name="Huvet M."/>
            <person name="La Scola B."/>
            <person name="Holmberg M."/>
            <person name="Andersson S.G.E."/>
        </authorList>
    </citation>
    <scope>NUCLEOTIDE SEQUENCE [LARGE SCALE GENOMIC DNA]</scope>
    <source>
        <strain>Toulouse</strain>
    </source>
</reference>
<dbReference type="EC" id="5.1.1.7" evidence="1"/>
<dbReference type="EMBL" id="BX897700">
    <property type="protein sequence ID" value="CAF26806.1"/>
    <property type="molecule type" value="Genomic_DNA"/>
</dbReference>
<dbReference type="RefSeq" id="WP_011179960.1">
    <property type="nucleotide sequence ID" value="NC_005955.1"/>
</dbReference>
<dbReference type="SMR" id="Q6FYC7"/>
<dbReference type="KEGG" id="bqu:BQ13480"/>
<dbReference type="eggNOG" id="COG0253">
    <property type="taxonomic scope" value="Bacteria"/>
</dbReference>
<dbReference type="HOGENOM" id="CLU_053306_1_0_5"/>
<dbReference type="OrthoDB" id="9805408at2"/>
<dbReference type="UniPathway" id="UPA00034">
    <property type="reaction ID" value="UER00025"/>
</dbReference>
<dbReference type="Proteomes" id="UP000000597">
    <property type="component" value="Chromosome"/>
</dbReference>
<dbReference type="GO" id="GO:0005829">
    <property type="term" value="C:cytosol"/>
    <property type="evidence" value="ECO:0007669"/>
    <property type="project" value="TreeGrafter"/>
</dbReference>
<dbReference type="GO" id="GO:0008837">
    <property type="term" value="F:diaminopimelate epimerase activity"/>
    <property type="evidence" value="ECO:0007669"/>
    <property type="project" value="UniProtKB-UniRule"/>
</dbReference>
<dbReference type="GO" id="GO:0009089">
    <property type="term" value="P:lysine biosynthetic process via diaminopimelate"/>
    <property type="evidence" value="ECO:0007669"/>
    <property type="project" value="UniProtKB-UniRule"/>
</dbReference>
<dbReference type="Gene3D" id="3.10.310.10">
    <property type="entry name" value="Diaminopimelate Epimerase, Chain A, domain 1"/>
    <property type="match status" value="2"/>
</dbReference>
<dbReference type="HAMAP" id="MF_00197">
    <property type="entry name" value="DAP_epimerase"/>
    <property type="match status" value="1"/>
</dbReference>
<dbReference type="InterPro" id="IPR018510">
    <property type="entry name" value="DAP_epimerase_AS"/>
</dbReference>
<dbReference type="InterPro" id="IPR001653">
    <property type="entry name" value="DAP_epimerase_DapF"/>
</dbReference>
<dbReference type="NCBIfam" id="TIGR00652">
    <property type="entry name" value="DapF"/>
    <property type="match status" value="1"/>
</dbReference>
<dbReference type="PANTHER" id="PTHR31689:SF0">
    <property type="entry name" value="DIAMINOPIMELATE EPIMERASE"/>
    <property type="match status" value="1"/>
</dbReference>
<dbReference type="PANTHER" id="PTHR31689">
    <property type="entry name" value="DIAMINOPIMELATE EPIMERASE, CHLOROPLASTIC"/>
    <property type="match status" value="1"/>
</dbReference>
<dbReference type="Pfam" id="PF01678">
    <property type="entry name" value="DAP_epimerase"/>
    <property type="match status" value="2"/>
</dbReference>
<dbReference type="SUPFAM" id="SSF54506">
    <property type="entry name" value="Diaminopimelate epimerase-like"/>
    <property type="match status" value="2"/>
</dbReference>
<dbReference type="PROSITE" id="PS01326">
    <property type="entry name" value="DAP_EPIMERASE"/>
    <property type="match status" value="1"/>
</dbReference>
<evidence type="ECO:0000255" key="1">
    <source>
        <dbReference type="HAMAP-Rule" id="MF_00197"/>
    </source>
</evidence>
<keyword id="KW-0028">Amino-acid biosynthesis</keyword>
<keyword id="KW-0963">Cytoplasm</keyword>
<keyword id="KW-0413">Isomerase</keyword>
<keyword id="KW-0457">Lysine biosynthesis</keyword>
<sequence>MKTPFRKMDGLGNQIIVADMRESTHALTPQAILALAADPQTHFDQIMTIHSSTQKEADFRIEIWNADGSMAKACGNGTRCVIAWLTDHNLGESFRLETPAGIIEGKRQTDNLISVDMGCPNFNAKEMPVSREIADTNYVKITAGPLKDACLVSIGNLHAIFFVEDNIQQIPLEKYGPKLEHDPLFPERCNISIASVTSHKSLNLRTWERGAGLTKACGSAACASAVAAYRRGLTQRHIDVNLPGGTLNIVYREDNHIVMTGPTKYEFGGFLNPLTGTYKKDHF</sequence>
<proteinExistence type="inferred from homology"/>
<name>DAPF_BARQU</name>
<protein>
    <recommendedName>
        <fullName evidence="1">Diaminopimelate epimerase</fullName>
        <shortName evidence="1">DAP epimerase</shortName>
        <ecNumber evidence="1">5.1.1.7</ecNumber>
    </recommendedName>
    <alternativeName>
        <fullName evidence="1">PLP-independent amino acid racemase</fullName>
    </alternativeName>
</protein>
<organism>
    <name type="scientific">Bartonella quintana (strain Toulouse)</name>
    <name type="common">Rochalimaea quintana</name>
    <dbReference type="NCBI Taxonomy" id="283165"/>
    <lineage>
        <taxon>Bacteria</taxon>
        <taxon>Pseudomonadati</taxon>
        <taxon>Pseudomonadota</taxon>
        <taxon>Alphaproteobacteria</taxon>
        <taxon>Hyphomicrobiales</taxon>
        <taxon>Bartonellaceae</taxon>
        <taxon>Bartonella</taxon>
    </lineage>
</organism>
<comment type="function">
    <text evidence="1">Catalyzes the stereoinversion of LL-2,6-diaminopimelate (L,L-DAP) to meso-diaminopimelate (meso-DAP), a precursor of L-lysine and an essential component of the bacterial peptidoglycan.</text>
</comment>
<comment type="catalytic activity">
    <reaction evidence="1">
        <text>(2S,6S)-2,6-diaminopimelate = meso-2,6-diaminopimelate</text>
        <dbReference type="Rhea" id="RHEA:15393"/>
        <dbReference type="ChEBI" id="CHEBI:57609"/>
        <dbReference type="ChEBI" id="CHEBI:57791"/>
        <dbReference type="EC" id="5.1.1.7"/>
    </reaction>
</comment>
<comment type="pathway">
    <text evidence="1">Amino-acid biosynthesis; L-lysine biosynthesis via DAP pathway; DL-2,6-diaminopimelate from LL-2,6-diaminopimelate: step 1/1.</text>
</comment>
<comment type="subunit">
    <text evidence="1">Homodimer.</text>
</comment>
<comment type="subcellular location">
    <subcellularLocation>
        <location evidence="1">Cytoplasm</location>
    </subcellularLocation>
</comment>
<comment type="similarity">
    <text evidence="1">Belongs to the diaminopimelate epimerase family.</text>
</comment>